<name>PURA_PECAS</name>
<protein>
    <recommendedName>
        <fullName evidence="1">Adenylosuccinate synthetase</fullName>
        <shortName evidence="1">AMPSase</shortName>
        <shortName evidence="1">AdSS</shortName>
        <ecNumber evidence="1">6.3.4.4</ecNumber>
    </recommendedName>
    <alternativeName>
        <fullName evidence="1">IMP--aspartate ligase</fullName>
    </alternativeName>
</protein>
<organism>
    <name type="scientific">Pectobacterium atrosepticum (strain SCRI 1043 / ATCC BAA-672)</name>
    <name type="common">Erwinia carotovora subsp. atroseptica</name>
    <dbReference type="NCBI Taxonomy" id="218491"/>
    <lineage>
        <taxon>Bacteria</taxon>
        <taxon>Pseudomonadati</taxon>
        <taxon>Pseudomonadota</taxon>
        <taxon>Gammaproteobacteria</taxon>
        <taxon>Enterobacterales</taxon>
        <taxon>Pectobacteriaceae</taxon>
        <taxon>Pectobacterium</taxon>
    </lineage>
</organism>
<comment type="function">
    <text evidence="1">Plays an important role in the de novo pathway of purine nucleotide biosynthesis. Catalyzes the first committed step in the biosynthesis of AMP from IMP.</text>
</comment>
<comment type="catalytic activity">
    <reaction evidence="1">
        <text>IMP + L-aspartate + GTP = N(6)-(1,2-dicarboxyethyl)-AMP + GDP + phosphate + 2 H(+)</text>
        <dbReference type="Rhea" id="RHEA:15753"/>
        <dbReference type="ChEBI" id="CHEBI:15378"/>
        <dbReference type="ChEBI" id="CHEBI:29991"/>
        <dbReference type="ChEBI" id="CHEBI:37565"/>
        <dbReference type="ChEBI" id="CHEBI:43474"/>
        <dbReference type="ChEBI" id="CHEBI:57567"/>
        <dbReference type="ChEBI" id="CHEBI:58053"/>
        <dbReference type="ChEBI" id="CHEBI:58189"/>
        <dbReference type="EC" id="6.3.4.4"/>
    </reaction>
</comment>
<comment type="cofactor">
    <cofactor evidence="1">
        <name>Mg(2+)</name>
        <dbReference type="ChEBI" id="CHEBI:18420"/>
    </cofactor>
    <text evidence="1">Binds 1 Mg(2+) ion per subunit.</text>
</comment>
<comment type="pathway">
    <text evidence="1">Purine metabolism; AMP biosynthesis via de novo pathway; AMP from IMP: step 1/2.</text>
</comment>
<comment type="subunit">
    <text evidence="1">Homodimer.</text>
</comment>
<comment type="subcellular location">
    <subcellularLocation>
        <location evidence="1">Cytoplasm</location>
    </subcellularLocation>
</comment>
<comment type="similarity">
    <text evidence="1">Belongs to the adenylosuccinate synthetase family.</text>
</comment>
<gene>
    <name evidence="1" type="primary">purA</name>
    <name type="ordered locus">ECA3929</name>
</gene>
<reference key="1">
    <citation type="journal article" date="2004" name="Proc. Natl. Acad. Sci. U.S.A.">
        <title>Genome sequence of the enterobacterial phytopathogen Erwinia carotovora subsp. atroseptica and characterization of virulence factors.</title>
        <authorList>
            <person name="Bell K.S."/>
            <person name="Sebaihia M."/>
            <person name="Pritchard L."/>
            <person name="Holden M.T.G."/>
            <person name="Hyman L.J."/>
            <person name="Holeva M.C."/>
            <person name="Thomson N.R."/>
            <person name="Bentley S.D."/>
            <person name="Churcher L.J.C."/>
            <person name="Mungall K."/>
            <person name="Atkin R."/>
            <person name="Bason N."/>
            <person name="Brooks K."/>
            <person name="Chillingworth T."/>
            <person name="Clark K."/>
            <person name="Doggett J."/>
            <person name="Fraser A."/>
            <person name="Hance Z."/>
            <person name="Hauser H."/>
            <person name="Jagels K."/>
            <person name="Moule S."/>
            <person name="Norbertczak H."/>
            <person name="Ormond D."/>
            <person name="Price C."/>
            <person name="Quail M.A."/>
            <person name="Sanders M."/>
            <person name="Walker D."/>
            <person name="Whitehead S."/>
            <person name="Salmond G.P.C."/>
            <person name="Birch P.R.J."/>
            <person name="Parkhill J."/>
            <person name="Toth I.K."/>
        </authorList>
    </citation>
    <scope>NUCLEOTIDE SEQUENCE [LARGE SCALE GENOMIC DNA]</scope>
    <source>
        <strain>SCRI 1043 / ATCC BAA-672</strain>
    </source>
</reference>
<evidence type="ECO:0000255" key="1">
    <source>
        <dbReference type="HAMAP-Rule" id="MF_00011"/>
    </source>
</evidence>
<sequence length="432" mass="47071">MGKNVVVLGTQWGDEGKGKVVDLLTERAKYVVRYQGGHNAGHTLVINGEKTVLHLIPSGILRENVVSIIGNGVVLAPDALMKEMTELEARGVPVRERLLLSEACPLILPYHVALDNAREKARGAKAIGTTGRGIGPAYEDKVARRGLRVGDLFDKETFAVKLKEIVEYHNFQLVNYYKVDAVDYQKVLDDVLAIADILTAMVVDVSDLLYKAHLRGDFVMFEGAQGTLLDIDHGTYPYVTSSNTTAGGVATGSGLGPRYVDYVLGIVKAYSTRVGAGPFPTELFEEVGEHLSQKGNEFGATTGRRRRTGWLDAVAVRRAVQINSLSGFCLTKLDVLDGLKEIKICVGYRLPNGTEVDTTPLAAEGWEGLEPIYETVPGWSESTFGVKDHSKLPQAALNYIKRIEEITGVPIDIISTGPDRSETMVLRDPFDA</sequence>
<keyword id="KW-0963">Cytoplasm</keyword>
<keyword id="KW-0342">GTP-binding</keyword>
<keyword id="KW-0436">Ligase</keyword>
<keyword id="KW-0460">Magnesium</keyword>
<keyword id="KW-0479">Metal-binding</keyword>
<keyword id="KW-0547">Nucleotide-binding</keyword>
<keyword id="KW-0658">Purine biosynthesis</keyword>
<keyword id="KW-1185">Reference proteome</keyword>
<dbReference type="EC" id="6.3.4.4" evidence="1"/>
<dbReference type="EMBL" id="BX950851">
    <property type="protein sequence ID" value="CAG76826.1"/>
    <property type="molecule type" value="Genomic_DNA"/>
</dbReference>
<dbReference type="RefSeq" id="WP_011095425.1">
    <property type="nucleotide sequence ID" value="NC_004547.2"/>
</dbReference>
<dbReference type="SMR" id="Q6D072"/>
<dbReference type="STRING" id="218491.ECA3929"/>
<dbReference type="KEGG" id="eca:ECA3929"/>
<dbReference type="PATRIC" id="fig|218491.5.peg.3994"/>
<dbReference type="eggNOG" id="COG0104">
    <property type="taxonomic scope" value="Bacteria"/>
</dbReference>
<dbReference type="HOGENOM" id="CLU_029848_0_0_6"/>
<dbReference type="OrthoDB" id="9807553at2"/>
<dbReference type="UniPathway" id="UPA00075">
    <property type="reaction ID" value="UER00335"/>
</dbReference>
<dbReference type="Proteomes" id="UP000007966">
    <property type="component" value="Chromosome"/>
</dbReference>
<dbReference type="GO" id="GO:0005737">
    <property type="term" value="C:cytoplasm"/>
    <property type="evidence" value="ECO:0007669"/>
    <property type="project" value="UniProtKB-SubCell"/>
</dbReference>
<dbReference type="GO" id="GO:0004019">
    <property type="term" value="F:adenylosuccinate synthase activity"/>
    <property type="evidence" value="ECO:0007669"/>
    <property type="project" value="UniProtKB-UniRule"/>
</dbReference>
<dbReference type="GO" id="GO:0005525">
    <property type="term" value="F:GTP binding"/>
    <property type="evidence" value="ECO:0007669"/>
    <property type="project" value="UniProtKB-UniRule"/>
</dbReference>
<dbReference type="GO" id="GO:0000287">
    <property type="term" value="F:magnesium ion binding"/>
    <property type="evidence" value="ECO:0007669"/>
    <property type="project" value="UniProtKB-UniRule"/>
</dbReference>
<dbReference type="GO" id="GO:0044208">
    <property type="term" value="P:'de novo' AMP biosynthetic process"/>
    <property type="evidence" value="ECO:0007669"/>
    <property type="project" value="UniProtKB-UniRule"/>
</dbReference>
<dbReference type="GO" id="GO:0046040">
    <property type="term" value="P:IMP metabolic process"/>
    <property type="evidence" value="ECO:0007669"/>
    <property type="project" value="TreeGrafter"/>
</dbReference>
<dbReference type="CDD" id="cd03108">
    <property type="entry name" value="AdSS"/>
    <property type="match status" value="1"/>
</dbReference>
<dbReference type="FunFam" id="1.10.300.10:FF:000001">
    <property type="entry name" value="Adenylosuccinate synthetase"/>
    <property type="match status" value="1"/>
</dbReference>
<dbReference type="FunFam" id="3.90.170.10:FF:000001">
    <property type="entry name" value="Adenylosuccinate synthetase"/>
    <property type="match status" value="1"/>
</dbReference>
<dbReference type="Gene3D" id="3.40.440.10">
    <property type="entry name" value="Adenylosuccinate Synthetase, subunit A, domain 1"/>
    <property type="match status" value="1"/>
</dbReference>
<dbReference type="Gene3D" id="1.10.300.10">
    <property type="entry name" value="Adenylosuccinate Synthetase, subunit A, domain 2"/>
    <property type="match status" value="1"/>
</dbReference>
<dbReference type="Gene3D" id="3.90.170.10">
    <property type="entry name" value="Adenylosuccinate Synthetase, subunit A, domain 3"/>
    <property type="match status" value="1"/>
</dbReference>
<dbReference type="HAMAP" id="MF_00011">
    <property type="entry name" value="Adenylosucc_synth"/>
    <property type="match status" value="1"/>
</dbReference>
<dbReference type="InterPro" id="IPR018220">
    <property type="entry name" value="Adenylosuccin_syn_GTP-bd"/>
</dbReference>
<dbReference type="InterPro" id="IPR033128">
    <property type="entry name" value="Adenylosuccin_syn_Lys_AS"/>
</dbReference>
<dbReference type="InterPro" id="IPR042109">
    <property type="entry name" value="Adenylosuccinate_synth_dom1"/>
</dbReference>
<dbReference type="InterPro" id="IPR042110">
    <property type="entry name" value="Adenylosuccinate_synth_dom2"/>
</dbReference>
<dbReference type="InterPro" id="IPR042111">
    <property type="entry name" value="Adenylosuccinate_synth_dom3"/>
</dbReference>
<dbReference type="InterPro" id="IPR001114">
    <property type="entry name" value="Adenylosuccinate_synthetase"/>
</dbReference>
<dbReference type="InterPro" id="IPR027417">
    <property type="entry name" value="P-loop_NTPase"/>
</dbReference>
<dbReference type="NCBIfam" id="NF002223">
    <property type="entry name" value="PRK01117.1"/>
    <property type="match status" value="1"/>
</dbReference>
<dbReference type="NCBIfam" id="TIGR00184">
    <property type="entry name" value="purA"/>
    <property type="match status" value="1"/>
</dbReference>
<dbReference type="PANTHER" id="PTHR11846">
    <property type="entry name" value="ADENYLOSUCCINATE SYNTHETASE"/>
    <property type="match status" value="1"/>
</dbReference>
<dbReference type="PANTHER" id="PTHR11846:SF0">
    <property type="entry name" value="ADENYLOSUCCINATE SYNTHETASE"/>
    <property type="match status" value="1"/>
</dbReference>
<dbReference type="Pfam" id="PF00709">
    <property type="entry name" value="Adenylsucc_synt"/>
    <property type="match status" value="1"/>
</dbReference>
<dbReference type="SMART" id="SM00788">
    <property type="entry name" value="Adenylsucc_synt"/>
    <property type="match status" value="1"/>
</dbReference>
<dbReference type="SUPFAM" id="SSF52540">
    <property type="entry name" value="P-loop containing nucleoside triphosphate hydrolases"/>
    <property type="match status" value="1"/>
</dbReference>
<dbReference type="PROSITE" id="PS01266">
    <property type="entry name" value="ADENYLOSUCCIN_SYN_1"/>
    <property type="match status" value="1"/>
</dbReference>
<dbReference type="PROSITE" id="PS00513">
    <property type="entry name" value="ADENYLOSUCCIN_SYN_2"/>
    <property type="match status" value="1"/>
</dbReference>
<feature type="chain" id="PRO_0000224280" description="Adenylosuccinate synthetase">
    <location>
        <begin position="1"/>
        <end position="432"/>
    </location>
</feature>
<feature type="active site" description="Proton acceptor" evidence="1">
    <location>
        <position position="14"/>
    </location>
</feature>
<feature type="active site" description="Proton donor" evidence="1">
    <location>
        <position position="42"/>
    </location>
</feature>
<feature type="binding site" evidence="1">
    <location>
        <begin position="13"/>
        <end position="19"/>
    </location>
    <ligand>
        <name>GTP</name>
        <dbReference type="ChEBI" id="CHEBI:37565"/>
    </ligand>
</feature>
<feature type="binding site" description="in other chain" evidence="1">
    <location>
        <begin position="14"/>
        <end position="17"/>
    </location>
    <ligand>
        <name>IMP</name>
        <dbReference type="ChEBI" id="CHEBI:58053"/>
        <note>ligand shared between dimeric partners</note>
    </ligand>
</feature>
<feature type="binding site" evidence="1">
    <location>
        <position position="14"/>
    </location>
    <ligand>
        <name>Mg(2+)</name>
        <dbReference type="ChEBI" id="CHEBI:18420"/>
    </ligand>
</feature>
<feature type="binding site" description="in other chain" evidence="1">
    <location>
        <begin position="39"/>
        <end position="42"/>
    </location>
    <ligand>
        <name>IMP</name>
        <dbReference type="ChEBI" id="CHEBI:58053"/>
        <note>ligand shared between dimeric partners</note>
    </ligand>
</feature>
<feature type="binding site" evidence="1">
    <location>
        <begin position="41"/>
        <end position="43"/>
    </location>
    <ligand>
        <name>GTP</name>
        <dbReference type="ChEBI" id="CHEBI:37565"/>
    </ligand>
</feature>
<feature type="binding site" evidence="1">
    <location>
        <position position="41"/>
    </location>
    <ligand>
        <name>Mg(2+)</name>
        <dbReference type="ChEBI" id="CHEBI:18420"/>
    </ligand>
</feature>
<feature type="binding site" description="in other chain" evidence="1">
    <location>
        <position position="130"/>
    </location>
    <ligand>
        <name>IMP</name>
        <dbReference type="ChEBI" id="CHEBI:58053"/>
        <note>ligand shared between dimeric partners</note>
    </ligand>
</feature>
<feature type="binding site" evidence="1">
    <location>
        <position position="144"/>
    </location>
    <ligand>
        <name>IMP</name>
        <dbReference type="ChEBI" id="CHEBI:58053"/>
        <note>ligand shared between dimeric partners</note>
    </ligand>
</feature>
<feature type="binding site" description="in other chain" evidence="1">
    <location>
        <position position="225"/>
    </location>
    <ligand>
        <name>IMP</name>
        <dbReference type="ChEBI" id="CHEBI:58053"/>
        <note>ligand shared between dimeric partners</note>
    </ligand>
</feature>
<feature type="binding site" description="in other chain" evidence="1">
    <location>
        <position position="240"/>
    </location>
    <ligand>
        <name>IMP</name>
        <dbReference type="ChEBI" id="CHEBI:58053"/>
        <note>ligand shared between dimeric partners</note>
    </ligand>
</feature>
<feature type="binding site" evidence="1">
    <location>
        <begin position="300"/>
        <end position="306"/>
    </location>
    <ligand>
        <name>substrate</name>
    </ligand>
</feature>
<feature type="binding site" description="in other chain" evidence="1">
    <location>
        <position position="304"/>
    </location>
    <ligand>
        <name>IMP</name>
        <dbReference type="ChEBI" id="CHEBI:58053"/>
        <note>ligand shared between dimeric partners</note>
    </ligand>
</feature>
<feature type="binding site" evidence="1">
    <location>
        <position position="306"/>
    </location>
    <ligand>
        <name>GTP</name>
        <dbReference type="ChEBI" id="CHEBI:37565"/>
    </ligand>
</feature>
<feature type="binding site" evidence="1">
    <location>
        <begin position="332"/>
        <end position="334"/>
    </location>
    <ligand>
        <name>GTP</name>
        <dbReference type="ChEBI" id="CHEBI:37565"/>
    </ligand>
</feature>
<feature type="binding site" evidence="1">
    <location>
        <begin position="415"/>
        <end position="417"/>
    </location>
    <ligand>
        <name>GTP</name>
        <dbReference type="ChEBI" id="CHEBI:37565"/>
    </ligand>
</feature>
<accession>Q6D072</accession>
<proteinExistence type="inferred from homology"/>